<protein>
    <recommendedName>
        <fullName evidence="1">L-arabinose isomerase</fullName>
        <ecNumber evidence="1">5.3.1.4</ecNumber>
    </recommendedName>
</protein>
<reference key="1">
    <citation type="journal article" date="2009" name="Appl. Environ. Microbiol.">
        <title>Novel features of the polysaccharide-digesting gliding bacterium Flavobacterium johnsoniae as revealed by genome sequence analysis.</title>
        <authorList>
            <person name="McBride M.J."/>
            <person name="Xie G."/>
            <person name="Martens E.C."/>
            <person name="Lapidus A."/>
            <person name="Henrissat B."/>
            <person name="Rhodes R.G."/>
            <person name="Goltsman E."/>
            <person name="Wang W."/>
            <person name="Xu J."/>
            <person name="Hunnicutt D.W."/>
            <person name="Staroscik A.M."/>
            <person name="Hoover T.R."/>
            <person name="Cheng Y.Q."/>
            <person name="Stein J.L."/>
        </authorList>
    </citation>
    <scope>NUCLEOTIDE SEQUENCE [LARGE SCALE GENOMIC DNA]</scope>
    <source>
        <strain>ATCC 17061 / DSM 2064 / JCM 8514 / BCRC 14874 / CCUG 350202 / NBRC 14942 / NCIMB 11054 / UW101</strain>
    </source>
</reference>
<dbReference type="EC" id="5.3.1.4" evidence="1"/>
<dbReference type="EMBL" id="CP000685">
    <property type="protein sequence ID" value="ABQ04154.1"/>
    <property type="molecule type" value="Genomic_DNA"/>
</dbReference>
<dbReference type="RefSeq" id="WP_012023206.1">
    <property type="nucleotide sequence ID" value="NC_009441.1"/>
</dbReference>
<dbReference type="SMR" id="A5FKW3"/>
<dbReference type="STRING" id="376686.Fjoh_1121"/>
<dbReference type="KEGG" id="fjo:Fjoh_1121"/>
<dbReference type="eggNOG" id="COG2160">
    <property type="taxonomic scope" value="Bacteria"/>
</dbReference>
<dbReference type="HOGENOM" id="CLU_045663_0_0_10"/>
<dbReference type="OrthoDB" id="9765600at2"/>
<dbReference type="UniPathway" id="UPA00145">
    <property type="reaction ID" value="UER00565"/>
</dbReference>
<dbReference type="Proteomes" id="UP000006694">
    <property type="component" value="Chromosome"/>
</dbReference>
<dbReference type="GO" id="GO:0005829">
    <property type="term" value="C:cytosol"/>
    <property type="evidence" value="ECO:0007669"/>
    <property type="project" value="TreeGrafter"/>
</dbReference>
<dbReference type="GO" id="GO:0008733">
    <property type="term" value="F:L-arabinose isomerase activity"/>
    <property type="evidence" value="ECO:0007669"/>
    <property type="project" value="UniProtKB-UniRule"/>
</dbReference>
<dbReference type="GO" id="GO:0030145">
    <property type="term" value="F:manganese ion binding"/>
    <property type="evidence" value="ECO:0007669"/>
    <property type="project" value="UniProtKB-UniRule"/>
</dbReference>
<dbReference type="GO" id="GO:0019569">
    <property type="term" value="P:L-arabinose catabolic process to xylulose 5-phosphate"/>
    <property type="evidence" value="ECO:0007669"/>
    <property type="project" value="UniProtKB-UniRule"/>
</dbReference>
<dbReference type="CDD" id="cd03557">
    <property type="entry name" value="L-arabinose_isomerase"/>
    <property type="match status" value="1"/>
</dbReference>
<dbReference type="Gene3D" id="3.40.50.10940">
    <property type="match status" value="1"/>
</dbReference>
<dbReference type="HAMAP" id="MF_00519">
    <property type="entry name" value="Arabinose_Isome"/>
    <property type="match status" value="1"/>
</dbReference>
<dbReference type="InterPro" id="IPR024664">
    <property type="entry name" value="Ara_Isoase_C"/>
</dbReference>
<dbReference type="InterPro" id="IPR055390">
    <property type="entry name" value="AraA_central"/>
</dbReference>
<dbReference type="InterPro" id="IPR055389">
    <property type="entry name" value="AraA_N"/>
</dbReference>
<dbReference type="InterPro" id="IPR038583">
    <property type="entry name" value="AraA_N_sf"/>
</dbReference>
<dbReference type="InterPro" id="IPR004216">
    <property type="entry name" value="Fuc/Ara_isomerase_C"/>
</dbReference>
<dbReference type="InterPro" id="IPR009015">
    <property type="entry name" value="Fucose_isomerase_N/cen_sf"/>
</dbReference>
<dbReference type="InterPro" id="IPR003762">
    <property type="entry name" value="Lara_isomerase"/>
</dbReference>
<dbReference type="NCBIfam" id="NF002795">
    <property type="entry name" value="PRK02929.1"/>
    <property type="match status" value="1"/>
</dbReference>
<dbReference type="PANTHER" id="PTHR38464">
    <property type="entry name" value="L-ARABINOSE ISOMERASE"/>
    <property type="match status" value="1"/>
</dbReference>
<dbReference type="PANTHER" id="PTHR38464:SF1">
    <property type="entry name" value="L-ARABINOSE ISOMERASE"/>
    <property type="match status" value="1"/>
</dbReference>
<dbReference type="Pfam" id="PF24856">
    <property type="entry name" value="AraA_central"/>
    <property type="match status" value="1"/>
</dbReference>
<dbReference type="Pfam" id="PF02610">
    <property type="entry name" value="AraA_N"/>
    <property type="match status" value="1"/>
</dbReference>
<dbReference type="Pfam" id="PF11762">
    <property type="entry name" value="Arabinose_Iso_C"/>
    <property type="match status" value="1"/>
</dbReference>
<dbReference type="PIRSF" id="PIRSF001478">
    <property type="entry name" value="L-ara_isomerase"/>
    <property type="match status" value="1"/>
</dbReference>
<dbReference type="SUPFAM" id="SSF50443">
    <property type="entry name" value="FucI/AraA C-terminal domain-like"/>
    <property type="match status" value="1"/>
</dbReference>
<dbReference type="SUPFAM" id="SSF53743">
    <property type="entry name" value="FucI/AraA N-terminal and middle domains"/>
    <property type="match status" value="1"/>
</dbReference>
<feature type="chain" id="PRO_1000081677" description="L-arabinose isomerase">
    <location>
        <begin position="1"/>
        <end position="502"/>
    </location>
</feature>
<feature type="binding site" evidence="1">
    <location>
        <position position="306"/>
    </location>
    <ligand>
        <name>Mn(2+)</name>
        <dbReference type="ChEBI" id="CHEBI:29035"/>
    </ligand>
</feature>
<feature type="binding site" evidence="1">
    <location>
        <position position="333"/>
    </location>
    <ligand>
        <name>Mn(2+)</name>
        <dbReference type="ChEBI" id="CHEBI:29035"/>
    </ligand>
</feature>
<feature type="binding site" evidence="1">
    <location>
        <position position="350"/>
    </location>
    <ligand>
        <name>Mn(2+)</name>
        <dbReference type="ChEBI" id="CHEBI:29035"/>
    </ligand>
</feature>
<feature type="binding site" evidence="1">
    <location>
        <position position="449"/>
    </location>
    <ligand>
        <name>Mn(2+)</name>
        <dbReference type="ChEBI" id="CHEBI:29035"/>
    </ligand>
</feature>
<comment type="function">
    <text evidence="1">Catalyzes the conversion of L-arabinose to L-ribulose.</text>
</comment>
<comment type="catalytic activity">
    <reaction evidence="1">
        <text>beta-L-arabinopyranose = L-ribulose</text>
        <dbReference type="Rhea" id="RHEA:14821"/>
        <dbReference type="ChEBI" id="CHEBI:16880"/>
        <dbReference type="ChEBI" id="CHEBI:40886"/>
        <dbReference type="EC" id="5.3.1.4"/>
    </reaction>
</comment>
<comment type="cofactor">
    <cofactor evidence="1">
        <name>Mn(2+)</name>
        <dbReference type="ChEBI" id="CHEBI:29035"/>
    </cofactor>
    <text evidence="1">Binds 1 Mn(2+) ion per subunit.</text>
</comment>
<comment type="pathway">
    <text evidence="1">Carbohydrate degradation; L-arabinose degradation via L-ribulose; D-xylulose 5-phosphate from L-arabinose (bacterial route): step 1/3.</text>
</comment>
<comment type="similarity">
    <text evidence="1">Belongs to the arabinose isomerase family.</text>
</comment>
<proteinExistence type="inferred from homology"/>
<name>ARAA_FLAJ1</name>
<evidence type="ECO:0000255" key="1">
    <source>
        <dbReference type="HAMAP-Rule" id="MF_00519"/>
    </source>
</evidence>
<organism>
    <name type="scientific">Flavobacterium johnsoniae (strain ATCC 17061 / DSM 2064 / JCM 8514 / BCRC 14874 / CCUG 350202 / NBRC 14942 / NCIMB 11054 / UW101)</name>
    <name type="common">Cytophaga johnsonae</name>
    <dbReference type="NCBI Taxonomy" id="376686"/>
    <lineage>
        <taxon>Bacteria</taxon>
        <taxon>Pseudomonadati</taxon>
        <taxon>Bacteroidota</taxon>
        <taxon>Flavobacteriia</taxon>
        <taxon>Flavobacteriales</taxon>
        <taxon>Flavobacteriaceae</taxon>
        <taxon>Flavobacterium</taxon>
    </lineage>
</organism>
<sequence length="502" mass="55639">MIDISQKEVWFVVGSQELYGEETLRKVAEHSQIIAKGLDASSSIPVKVVYKDVVKSPSQILDVCLAANSAKNCIGIIAWMHTFSPAKMWIGGLNILKKPLCHLHTQYNAEIPWGSIDMDFMNLNQSAHGDREFGFIMSRLRKKRKVVVGHWEDQRVQKQLGIWSRVVLGWDELQNLKVARIGDNMREVAVTEGDKVEAQIRFGMSVNGYDSSDVTKHIEKVTDKQLADLLAVYESSYNLTDSLKEGGAQRSSLVEAAKIELGLRAFLEEGGFGAFTDTFENLGVWKQLPGIATQRLMADGYGFGGEGDWKTAAMVRALKVMCIGLEGGTSFMEDYTYNFTPQKSYVLGSHMLEICPSIADGKPSCEVHPLGIGGKEDPARLVFNSPAGDAINVSLVDMGTRFRLIVNEVEAVKPMAELPKLPVARVLWDCKPNLEVAATAWILAGGAHHTVYSQSITTEYMEDFADIAGIELLVIDEKTTVREFKDKINANEAYFHLFQHGL</sequence>
<gene>
    <name evidence="1" type="primary">araA</name>
    <name type="ordered locus">Fjoh_1121</name>
</gene>
<accession>A5FKW3</accession>
<keyword id="KW-0054">Arabinose catabolism</keyword>
<keyword id="KW-0119">Carbohydrate metabolism</keyword>
<keyword id="KW-0413">Isomerase</keyword>
<keyword id="KW-0464">Manganese</keyword>
<keyword id="KW-0479">Metal-binding</keyword>